<evidence type="ECO:0000255" key="1">
    <source>
        <dbReference type="HAMAP-Rule" id="MF_00268"/>
    </source>
</evidence>
<evidence type="ECO:0000256" key="2">
    <source>
        <dbReference type="SAM" id="MobiDB-lite"/>
    </source>
</evidence>
<accession>C1L2V4</accession>
<proteinExistence type="inferred from homology"/>
<organism>
    <name type="scientific">Listeria monocytogenes serotype 4b (strain CLIP80459)</name>
    <dbReference type="NCBI Taxonomy" id="568819"/>
    <lineage>
        <taxon>Bacteria</taxon>
        <taxon>Bacillati</taxon>
        <taxon>Bacillota</taxon>
        <taxon>Bacilli</taxon>
        <taxon>Bacillales</taxon>
        <taxon>Listeriaceae</taxon>
        <taxon>Listeria</taxon>
    </lineage>
</organism>
<dbReference type="EMBL" id="FM242711">
    <property type="protein sequence ID" value="CAS05170.1"/>
    <property type="molecule type" value="Genomic_DNA"/>
</dbReference>
<dbReference type="RefSeq" id="WP_003725961.1">
    <property type="nucleotide sequence ID" value="NC_012488.1"/>
</dbReference>
<dbReference type="SMR" id="C1L2V4"/>
<dbReference type="KEGG" id="lmc:Lm4b_01407"/>
<dbReference type="HOGENOM" id="CLU_040469_3_2_9"/>
<dbReference type="GO" id="GO:0005829">
    <property type="term" value="C:cytosol"/>
    <property type="evidence" value="ECO:0007669"/>
    <property type="project" value="TreeGrafter"/>
</dbReference>
<dbReference type="GO" id="GO:0005524">
    <property type="term" value="F:ATP binding"/>
    <property type="evidence" value="ECO:0007669"/>
    <property type="project" value="UniProtKB-UniRule"/>
</dbReference>
<dbReference type="GO" id="GO:0016887">
    <property type="term" value="F:ATP hydrolysis activity"/>
    <property type="evidence" value="ECO:0007669"/>
    <property type="project" value="InterPro"/>
</dbReference>
<dbReference type="GO" id="GO:0140664">
    <property type="term" value="F:ATP-dependent DNA damage sensor activity"/>
    <property type="evidence" value="ECO:0007669"/>
    <property type="project" value="InterPro"/>
</dbReference>
<dbReference type="GO" id="GO:0003684">
    <property type="term" value="F:damaged DNA binding"/>
    <property type="evidence" value="ECO:0007669"/>
    <property type="project" value="UniProtKB-UniRule"/>
</dbReference>
<dbReference type="GO" id="GO:0003697">
    <property type="term" value="F:single-stranded DNA binding"/>
    <property type="evidence" value="ECO:0007669"/>
    <property type="project" value="UniProtKB-UniRule"/>
</dbReference>
<dbReference type="GO" id="GO:0006310">
    <property type="term" value="P:DNA recombination"/>
    <property type="evidence" value="ECO:0007669"/>
    <property type="project" value="UniProtKB-UniRule"/>
</dbReference>
<dbReference type="GO" id="GO:0006281">
    <property type="term" value="P:DNA repair"/>
    <property type="evidence" value="ECO:0007669"/>
    <property type="project" value="UniProtKB-UniRule"/>
</dbReference>
<dbReference type="GO" id="GO:0009432">
    <property type="term" value="P:SOS response"/>
    <property type="evidence" value="ECO:0007669"/>
    <property type="project" value="UniProtKB-UniRule"/>
</dbReference>
<dbReference type="CDD" id="cd00983">
    <property type="entry name" value="RecA"/>
    <property type="match status" value="1"/>
</dbReference>
<dbReference type="FunFam" id="3.40.50.300:FF:000087">
    <property type="entry name" value="Recombinase RecA"/>
    <property type="match status" value="1"/>
</dbReference>
<dbReference type="Gene3D" id="3.40.50.300">
    <property type="entry name" value="P-loop containing nucleotide triphosphate hydrolases"/>
    <property type="match status" value="1"/>
</dbReference>
<dbReference type="HAMAP" id="MF_00268">
    <property type="entry name" value="RecA"/>
    <property type="match status" value="1"/>
</dbReference>
<dbReference type="InterPro" id="IPR003593">
    <property type="entry name" value="AAA+_ATPase"/>
</dbReference>
<dbReference type="InterPro" id="IPR013765">
    <property type="entry name" value="DNA_recomb/repair_RecA"/>
</dbReference>
<dbReference type="InterPro" id="IPR020584">
    <property type="entry name" value="DNA_recomb/repair_RecA_CS"/>
</dbReference>
<dbReference type="InterPro" id="IPR027417">
    <property type="entry name" value="P-loop_NTPase"/>
</dbReference>
<dbReference type="InterPro" id="IPR049261">
    <property type="entry name" value="RecA-like_C"/>
</dbReference>
<dbReference type="InterPro" id="IPR049428">
    <property type="entry name" value="RecA-like_N"/>
</dbReference>
<dbReference type="InterPro" id="IPR020588">
    <property type="entry name" value="RecA_ATP-bd"/>
</dbReference>
<dbReference type="InterPro" id="IPR023400">
    <property type="entry name" value="RecA_C_sf"/>
</dbReference>
<dbReference type="InterPro" id="IPR020587">
    <property type="entry name" value="RecA_monomer-monomer_interface"/>
</dbReference>
<dbReference type="NCBIfam" id="TIGR02012">
    <property type="entry name" value="tigrfam_recA"/>
    <property type="match status" value="1"/>
</dbReference>
<dbReference type="PANTHER" id="PTHR45900:SF1">
    <property type="entry name" value="MITOCHONDRIAL DNA REPAIR PROTEIN RECA HOMOLOG-RELATED"/>
    <property type="match status" value="1"/>
</dbReference>
<dbReference type="PANTHER" id="PTHR45900">
    <property type="entry name" value="RECA"/>
    <property type="match status" value="1"/>
</dbReference>
<dbReference type="Pfam" id="PF00154">
    <property type="entry name" value="RecA"/>
    <property type="match status" value="1"/>
</dbReference>
<dbReference type="Pfam" id="PF21096">
    <property type="entry name" value="RecA_C"/>
    <property type="match status" value="1"/>
</dbReference>
<dbReference type="PRINTS" id="PR00142">
    <property type="entry name" value="RECA"/>
</dbReference>
<dbReference type="SMART" id="SM00382">
    <property type="entry name" value="AAA"/>
    <property type="match status" value="1"/>
</dbReference>
<dbReference type="SUPFAM" id="SSF52540">
    <property type="entry name" value="P-loop containing nucleoside triphosphate hydrolases"/>
    <property type="match status" value="1"/>
</dbReference>
<dbReference type="SUPFAM" id="SSF54752">
    <property type="entry name" value="RecA protein, C-terminal domain"/>
    <property type="match status" value="1"/>
</dbReference>
<dbReference type="PROSITE" id="PS00321">
    <property type="entry name" value="RECA_1"/>
    <property type="match status" value="1"/>
</dbReference>
<dbReference type="PROSITE" id="PS50162">
    <property type="entry name" value="RECA_2"/>
    <property type="match status" value="1"/>
</dbReference>
<dbReference type="PROSITE" id="PS50163">
    <property type="entry name" value="RECA_3"/>
    <property type="match status" value="1"/>
</dbReference>
<reference key="1">
    <citation type="journal article" date="2012" name="BMC Genomics">
        <title>Comparative genomics and transcriptomics of lineages I, II, and III strains of Listeria monocytogenes.</title>
        <authorList>
            <person name="Hain T."/>
            <person name="Ghai R."/>
            <person name="Billion A."/>
            <person name="Kuenne C.T."/>
            <person name="Steinweg C."/>
            <person name="Izar B."/>
            <person name="Mohamed W."/>
            <person name="Mraheil M."/>
            <person name="Domann E."/>
            <person name="Schaffrath S."/>
            <person name="Karst U."/>
            <person name="Goesmann A."/>
            <person name="Oehm S."/>
            <person name="Puhler A."/>
            <person name="Merkl R."/>
            <person name="Vorwerk S."/>
            <person name="Glaser P."/>
            <person name="Garrido P."/>
            <person name="Rusniok C."/>
            <person name="Buchrieser C."/>
            <person name="Goebel W."/>
            <person name="Chakraborty T."/>
        </authorList>
    </citation>
    <scope>NUCLEOTIDE SEQUENCE [LARGE SCALE GENOMIC DNA]</scope>
    <source>
        <strain>CLIP80459</strain>
    </source>
</reference>
<feature type="chain" id="PRO_1000204710" description="Protein RecA">
    <location>
        <begin position="1"/>
        <end position="348"/>
    </location>
</feature>
<feature type="region of interest" description="Disordered" evidence="2">
    <location>
        <begin position="325"/>
        <end position="348"/>
    </location>
</feature>
<feature type="compositionally biased region" description="Basic and acidic residues" evidence="2">
    <location>
        <begin position="325"/>
        <end position="335"/>
    </location>
</feature>
<feature type="compositionally biased region" description="Acidic residues" evidence="2">
    <location>
        <begin position="336"/>
        <end position="348"/>
    </location>
</feature>
<feature type="binding site" evidence="1">
    <location>
        <begin position="64"/>
        <end position="71"/>
    </location>
    <ligand>
        <name>ATP</name>
        <dbReference type="ChEBI" id="CHEBI:30616"/>
    </ligand>
</feature>
<comment type="function">
    <text evidence="1">Can catalyze the hydrolysis of ATP in the presence of single-stranded DNA, the ATP-dependent uptake of single-stranded DNA by duplex DNA, and the ATP-dependent hybridization of homologous single-stranded DNAs. It interacts with LexA causing its activation and leading to its autocatalytic cleavage.</text>
</comment>
<comment type="subcellular location">
    <subcellularLocation>
        <location evidence="1">Cytoplasm</location>
    </subcellularLocation>
</comment>
<comment type="similarity">
    <text evidence="1">Belongs to the RecA family.</text>
</comment>
<name>RECA_LISMC</name>
<protein>
    <recommendedName>
        <fullName evidence="1">Protein RecA</fullName>
    </recommendedName>
    <alternativeName>
        <fullName evidence="1">Recombinase A</fullName>
    </alternativeName>
</protein>
<gene>
    <name evidence="1" type="primary">recA</name>
    <name type="ordered locus">Lm4b_01407</name>
</gene>
<sequence length="348" mass="37950">MNDRQAALDQALKQIEKQFGKGSIMKLGEHSDQNISTISSGSLALDIALGVGGYPRGRIIEVYGPESSGKTTVALHAIAEVQAQGGTAAFIDAEHALDPAYAKNLGVNIDELLLSQPDTGEQALEIAEALVRSGAVDMLVIDSVAALVPRAEIEGEMGDAHVGLQARLMSQALRKLSGVINKSKTIAIFINQIREKVGVMFGNPEITPGGRALKFYSTVRLEVRRAEQLKQGTDVMGNKTKIKVVKNKVAPPFRIAEVDIMYGEGISREGELVDMAAEVDVINKSGSWYSYKEERIGQGRENAKQYLKEHTDIRDEISKRVREEYEIDGSNKEPLDEGEETLSLLDDE</sequence>
<keyword id="KW-0067">ATP-binding</keyword>
<keyword id="KW-0963">Cytoplasm</keyword>
<keyword id="KW-0227">DNA damage</keyword>
<keyword id="KW-0233">DNA recombination</keyword>
<keyword id="KW-0234">DNA repair</keyword>
<keyword id="KW-0238">DNA-binding</keyword>
<keyword id="KW-0547">Nucleotide-binding</keyword>
<keyword id="KW-0742">SOS response</keyword>